<organism>
    <name type="scientific">Cyclocybe aegerita</name>
    <name type="common">Black poplar mushroom</name>
    <name type="synonym">Agrocybe aegerita</name>
    <dbReference type="NCBI Taxonomy" id="1973307"/>
    <lineage>
        <taxon>Eukaryota</taxon>
        <taxon>Fungi</taxon>
        <taxon>Dikarya</taxon>
        <taxon>Basidiomycota</taxon>
        <taxon>Agaricomycotina</taxon>
        <taxon>Agaricomycetes</taxon>
        <taxon>Agaricomycetidae</taxon>
        <taxon>Agaricales</taxon>
        <taxon>Agaricineae</taxon>
        <taxon>Bolbitiaceae</taxon>
        <taxon>Cyclocybe</taxon>
    </lineage>
</organism>
<accession>C0HLG3</accession>
<accession>A0A5B9CUE1</accession>
<proteinExistence type="evidence at protein level"/>
<feature type="signal peptide" evidence="12">
    <location>
        <begin position="1"/>
        <end position="21"/>
    </location>
</feature>
<feature type="chain" id="PRO_0000446086" description="Ribonuclease ageritin" evidence="3">
    <location>
        <begin position="22"/>
        <end position="156"/>
    </location>
</feature>
<feature type="active site" evidence="10">
    <location>
        <position position="98"/>
    </location>
</feature>
<feature type="glycosylation site" description="N-linked (GlcNAc...) asparagine" evidence="1">
    <location>
        <position position="100"/>
    </location>
</feature>
<feature type="glycosylation site" description="N-linked (GlcNAc...) asparagine" evidence="1">
    <location>
        <position position="139"/>
    </location>
</feature>
<feature type="sequence conflict" description="In Ref. 4; AA sequence." evidence="9" ref="4">
    <original>C</original>
    <variation>M</variation>
    <location>
        <position position="39"/>
    </location>
</feature>
<feature type="sequence conflict" description="In Ref. 4; AA sequence." evidence="9" ref="4">
    <original>F</original>
    <variation>I</variation>
    <location>
        <position position="41"/>
    </location>
</feature>
<feature type="sequence conflict" description="In Ref. 5; AA sequence." evidence="9" ref="5">
    <original>K</original>
    <variation>V</variation>
    <location>
        <position position="153"/>
    </location>
</feature>
<feature type="sequence conflict" description="In Ref. 5; AA sequence." evidence="9" ref="5">
    <original>A</original>
    <variation>T</variation>
    <location>
        <position position="156"/>
    </location>
</feature>
<gene>
    <name evidence="8" type="primary">AGT1</name>
    <name type="ORF">AAE3_01767</name>
</gene>
<sequence length="156" mass="16910">MSESSTFTTAVVPEGEGVAPMAETVQYYNSYSDASIASCAFVDSGKDKIDKTKLVTYTSRLAASPAYQKVVGVGLKTAAGSIVPYVRLDMDNTGKGIHFNATKLSDSSAKLAAVLKTTVSMTEAQRTQLYMEYIKGIENRSAQFIWDWWRTGKAPA</sequence>
<name>RNAG_CYCAE</name>
<evidence type="ECO:0000255" key="1">
    <source>
        <dbReference type="PROSITE-ProRule" id="PRU00498"/>
    </source>
</evidence>
<evidence type="ECO:0000269" key="2">
    <source>
    </source>
</evidence>
<evidence type="ECO:0000269" key="3">
    <source>
    </source>
</evidence>
<evidence type="ECO:0000269" key="4">
    <source>
    </source>
</evidence>
<evidence type="ECO:0000269" key="5">
    <source>
    </source>
</evidence>
<evidence type="ECO:0000269" key="6">
    <source>
    </source>
</evidence>
<evidence type="ECO:0000303" key="7">
    <source>
    </source>
</evidence>
<evidence type="ECO:0000303" key="8">
    <source>
    </source>
</evidence>
<evidence type="ECO:0000305" key="9"/>
<evidence type="ECO:0000305" key="10">
    <source>
    </source>
</evidence>
<evidence type="ECO:0000305" key="11">
    <source>
    </source>
</evidence>
<evidence type="ECO:0000305" key="12">
    <source>
    </source>
</evidence>
<keyword id="KW-0903">Direct protein sequencing</keyword>
<keyword id="KW-0325">Glycoprotein</keyword>
<keyword id="KW-0378">Hydrolase</keyword>
<keyword id="KW-0456">Lyase</keyword>
<keyword id="KW-0460">Magnesium</keyword>
<keyword id="KW-0479">Metal-binding</keyword>
<keyword id="KW-0540">Nuclease</keyword>
<keyword id="KW-0732">Signal</keyword>
<keyword id="KW-0926">Vacuole</keyword>
<protein>
    <recommendedName>
        <fullName evidence="7">Ribonuclease ageritin</fullName>
        <ecNumber evidence="2 3 5">4.6.1.23</ecNumber>
    </recommendedName>
    <alternativeName>
        <fullName evidence="8">Ribotoxin</fullName>
    </alternativeName>
</protein>
<reference key="1">
    <citation type="journal article" date="2019" name="Appl. Environ. Microbiol.">
        <title>Heterologous production and functional characterization of ageritin, a novel type of ribotoxin highly expressed during fruiting of the edible mushroom Agrocybe aegerita.</title>
        <authorList>
            <person name="Tayyrov A."/>
            <person name="Azevedo S."/>
            <person name="Herzog R."/>
            <person name="Vogt E."/>
            <person name="Arzt S."/>
            <person name="Luethy P."/>
            <person name="Mueller P."/>
            <person name="Ruehl M."/>
            <person name="Hennicke F."/>
            <person name="Kuenzler M."/>
        </authorList>
    </citation>
    <scope>NUCLEOTIDE SEQUENCE [MRNA]</scope>
    <scope>CATALYTIC ACTIVITY</scope>
    <scope>DEVELOPMENTAL STAGE</scope>
    <source>
        <strain>AAE-3</strain>
    </source>
</reference>
<reference key="2">
    <citation type="journal article" date="2020" name="Int. J. Mol. Sci.">
        <title>Gene organization, expression, and localization of ribotoxin-like protein ageritin in fruiting body and mycelium of Agrocybe aegerita.</title>
        <authorList>
            <person name="Baglivo I."/>
            <person name="Ragucci S."/>
            <person name="D'Incecco P."/>
            <person name="Landi N."/>
            <person name="Russo R."/>
            <person name="Faoro F."/>
            <person name="Pedone P.V."/>
            <person name="Di Maro A."/>
        </authorList>
    </citation>
    <scope>NUCLEOTIDE SEQUENCE [MRNA]</scope>
    <scope>SUBCELLULAR LOCATION</scope>
</reference>
<reference key="3">
    <citation type="journal article" date="2018" name="BMC Genomics">
        <title>The genome sequence of the commercially cultivated mushroom Agrocybe aegerita reveals a conserved repertoire of fruiting-related genes and a versatile suite of biopolymer-degrading enzymes.</title>
        <authorList>
            <person name="Gupta D.K."/>
            <person name="Ruehl M."/>
            <person name="Mishra B."/>
            <person name="Kleofas V."/>
            <person name="Hofrichter M."/>
            <person name="Herzog R."/>
            <person name="Pecyna M.J."/>
            <person name="Sharma R."/>
            <person name="Kellner H."/>
            <person name="Hennicke F."/>
            <person name="Thines M."/>
        </authorList>
    </citation>
    <scope>NUCLEOTIDE SEQUENCE [LARGE SCALE GENOMIC DNA]</scope>
    <source>
        <strain>AAE-3</strain>
    </source>
</reference>
<reference evidence="9" key="4">
    <citation type="journal article" date="2017" name="Biochim. Biophys. Acta">
        <title>Purification, characterization and cytotoxicity assessment of Ageritin: The first ribotoxin from the basidiomycete mushroom Agrocybe aegerita.</title>
        <authorList>
            <person name="Landi N."/>
            <person name="Pacifico S."/>
            <person name="Ragucci S."/>
            <person name="Iglesias R."/>
            <person name="Piccolella S."/>
            <person name="Amici A."/>
            <person name="Di Giuseppe A.M.A."/>
            <person name="Di Maro A."/>
        </authorList>
    </citation>
    <scope>PROTEIN SEQUENCE OF 22-46</scope>
    <scope>FUNCTION</scope>
    <scope>CATALYTIC ACTIVITY</scope>
</reference>
<reference key="5">
    <citation type="journal article" date="2019" name="J. Biochem.">
        <title>Structural insights into nucleotide and protein sequence of Ageritin: a novel prototype of fungal ribotoxin.</title>
        <authorList>
            <person name="Landi N."/>
            <person name="Ragucci S."/>
            <person name="Russo R."/>
            <person name="Pedone P.V."/>
            <person name="Chambery A."/>
            <person name="Di Maro A."/>
        </authorList>
    </citation>
    <scope>PROTEIN SEQUENCE OF 61-69; 117-135 AND 141-156</scope>
    <scope>IDENTIFICATION BY MASS SPECTROMETRY</scope>
</reference>
<reference evidence="9" key="6">
    <citation type="journal article" date="2018" name="Biochim. Biophys. Acta">
        <title>Structural and enzymatic properties of Ageritin, a novel metal-dependent ribotoxin-like protein with antitumor activity.</title>
        <authorList>
            <person name="Ruggiero A."/>
            <person name="Garcia-Ortega L."/>
            <person name="Ragucci S."/>
            <person name="Russo R."/>
            <person name="Landi N."/>
            <person name="Berisio R."/>
            <person name="Di Maro A."/>
        </authorList>
    </citation>
    <scope>FUNCTION</scope>
    <scope>CATALYTIC ACTIVITY</scope>
    <scope>COFACTOR</scope>
    <scope>ACTIVITY REGULATION</scope>
    <scope>BIOPHYSICOCHEMICAL PROPERTIES</scope>
    <scope>SUBUNIT</scope>
    <scope>MASS SPECTROMETRY</scope>
</reference>
<dbReference type="EC" id="4.6.1.23" evidence="2 3 5"/>
<dbReference type="EMBL" id="MK411345">
    <property type="protein sequence ID" value="QEE04510.1"/>
    <property type="molecule type" value="mRNA"/>
</dbReference>
<dbReference type="SMR" id="C0HLG3"/>
<dbReference type="GlyCosmos" id="C0HLG3">
    <property type="glycosylation" value="2 sites, No reported glycans"/>
</dbReference>
<dbReference type="BRENDA" id="4.6.1.23">
    <property type="organism ID" value="8897"/>
</dbReference>
<dbReference type="GO" id="GO:0005775">
    <property type="term" value="C:vacuolar lumen"/>
    <property type="evidence" value="ECO:0007669"/>
    <property type="project" value="UniProtKB-SubCell"/>
</dbReference>
<dbReference type="GO" id="GO:0016829">
    <property type="term" value="F:lyase activity"/>
    <property type="evidence" value="ECO:0007669"/>
    <property type="project" value="UniProtKB-KW"/>
</dbReference>
<dbReference type="GO" id="GO:0000287">
    <property type="term" value="F:magnesium ion binding"/>
    <property type="evidence" value="ECO:0000314"/>
    <property type="project" value="UniProtKB"/>
</dbReference>
<dbReference type="GO" id="GO:0004521">
    <property type="term" value="F:RNA endonuclease activity"/>
    <property type="evidence" value="ECO:0000314"/>
    <property type="project" value="UniProtKB"/>
</dbReference>
<dbReference type="GO" id="GO:0033902">
    <property type="term" value="F:rRNA endonuclease activity"/>
    <property type="evidence" value="ECO:0007669"/>
    <property type="project" value="UniProtKB-EC"/>
</dbReference>
<dbReference type="GO" id="GO:0031640">
    <property type="term" value="P:killing of cells of another organism"/>
    <property type="evidence" value="ECO:0000314"/>
    <property type="project" value="UniProtKB"/>
</dbReference>
<comment type="function">
    <text evidence="2 3 5">Fungal ribonuclease involved in fungal defense. Highly specific and highly toxic fungal endonuclease that cleaves a single phosphodiester bond in the 28S RNA of eukaryotic ribosomes at a universally conserved GAGA tetraloop of the sarcin-ricin loop (SRL). The damage of the SRL inhibits the binding of translation elongation factors and halts protein biosynthesis, ultimately resulting in the death of the target cells (PubMed:28232091, PubMed:30262416, PubMed:31444206). Shows antitumor activity (PubMed:28232091, PubMed:30262416). Exerts cytotoxicity and induces apoptosis towards rat glial cells and human glioma cells, and also displays some activity towards human neurolastoma cell lines (PubMed:28232091). Shows a strong entomotoxicity against Aedes aegypti larvae, yet no nematotoxicity against nematodes (PubMed:31444206).</text>
</comment>
<comment type="catalytic activity">
    <reaction evidence="2 3 5">
        <text>a 28S rRNA containing guanosine-adenosine pair + H2O = an [RNA fragment]-3'-adenosine-3'-phosphate + a 5'-a hydroxy-guanosine-3'-[RNA fragment].</text>
        <dbReference type="EC" id="4.6.1.23"/>
    </reaction>
</comment>
<comment type="cofactor">
    <cofactor evidence="3">
        <name>Mg(2+)</name>
        <dbReference type="ChEBI" id="CHEBI:18420"/>
    </cofactor>
</comment>
<comment type="activity regulation">
    <text evidence="3">In contrast to most ribotoxins, activity is completely inhibited by EDTA.</text>
</comment>
<comment type="biophysicochemical properties">
    <temperatureDependence>
        <text evidence="3">Highly thermostable. Has a melting temperature of 78 degrees Celsius at pH 7.4.</text>
    </temperatureDependence>
</comment>
<comment type="subunit">
    <text evidence="3">Monomer.</text>
</comment>
<comment type="subcellular location">
    <subcellularLocation>
        <location evidence="6">Vacuole lumen</location>
    </subcellularLocation>
    <text evidence="12">Possibly sequestered into the vacuole to avoid its toxic activity on ribosomes.</text>
</comment>
<comment type="developmental stage">
    <text evidence="5">Highly Expressed during fruiting body formation.</text>
</comment>
<comment type="mass spectrometry" mass="14802.84" error="1.04" method="MALDI" evidence="4"/>
<comment type="mass spectrometry" mass="14802.94" method="MALDI" evidence="3"/>
<comment type="biotechnology">
    <text evidence="11">The strong larvicidal activity of ageritin makes this protein a promising candidate for novel biopesticide development.</text>
</comment>
<comment type="similarity">
    <text evidence="9">Belongs to the ribotoxin-like family.</text>
</comment>